<proteinExistence type="evidence at protein level"/>
<gene>
    <name type="primary">nudJ</name>
    <name type="ordered locus">Ecok1_10240</name>
    <name type="ORF">APECO1_216</name>
</gene>
<dbReference type="EC" id="3.6.1.-"/>
<dbReference type="EMBL" id="CP000468">
    <property type="protein sequence ID" value="ABJ00518.1"/>
    <property type="molecule type" value="Genomic_DNA"/>
</dbReference>
<dbReference type="RefSeq" id="WP_000476093.1">
    <property type="nucleotide sequence ID" value="NZ_CADILS010000019.1"/>
</dbReference>
<dbReference type="PDB" id="3DKU">
    <property type="method" value="X-ray"/>
    <property type="resolution" value="2.69 A"/>
    <property type="chains" value="A/B/C/D/E/F/G/H=1-153"/>
</dbReference>
<dbReference type="PDB" id="3SHD">
    <property type="method" value="X-ray"/>
    <property type="resolution" value="2.50 A"/>
    <property type="chains" value="A/B/C/D/E/F/G/H/I/J/K/L=1-153"/>
</dbReference>
<dbReference type="PDBsum" id="3DKU"/>
<dbReference type="PDBsum" id="3SHD"/>
<dbReference type="SMR" id="A1AA28"/>
<dbReference type="GeneID" id="75203720"/>
<dbReference type="KEGG" id="ecv:APECO1_216"/>
<dbReference type="HOGENOM" id="CLU_037162_6_1_6"/>
<dbReference type="EvolutionaryTrace" id="A1AA28"/>
<dbReference type="Proteomes" id="UP000008216">
    <property type="component" value="Chromosome"/>
</dbReference>
<dbReference type="GO" id="GO:0017110">
    <property type="term" value="F:nucleoside diphosphate phosphatase activity"/>
    <property type="evidence" value="ECO:0007669"/>
    <property type="project" value="InterPro"/>
</dbReference>
<dbReference type="GO" id="GO:0017111">
    <property type="term" value="F:ribonucleoside triphosphate phosphatase activity"/>
    <property type="evidence" value="ECO:0007669"/>
    <property type="project" value="InterPro"/>
</dbReference>
<dbReference type="GO" id="GO:0004787">
    <property type="term" value="F:thiamine diphosphate phosphatase activity"/>
    <property type="evidence" value="ECO:0007669"/>
    <property type="project" value="InterPro"/>
</dbReference>
<dbReference type="CDD" id="cd03675">
    <property type="entry name" value="NUDIX_Hydrolase"/>
    <property type="match status" value="1"/>
</dbReference>
<dbReference type="FunFam" id="3.90.79.10:FF:000017">
    <property type="entry name" value="Phosphatase NudJ"/>
    <property type="match status" value="1"/>
</dbReference>
<dbReference type="Gene3D" id="3.90.79.10">
    <property type="entry name" value="Nucleoside Triphosphate Pyrophosphohydrolase"/>
    <property type="match status" value="1"/>
</dbReference>
<dbReference type="InterPro" id="IPR020476">
    <property type="entry name" value="Nudix_hydrolase"/>
</dbReference>
<dbReference type="InterPro" id="IPR015797">
    <property type="entry name" value="NUDIX_hydrolase-like_dom_sf"/>
</dbReference>
<dbReference type="InterPro" id="IPR020084">
    <property type="entry name" value="NUDIX_hydrolase_CS"/>
</dbReference>
<dbReference type="InterPro" id="IPR000086">
    <property type="entry name" value="NUDIX_hydrolase_dom"/>
</dbReference>
<dbReference type="InterPro" id="IPR033713">
    <property type="entry name" value="NudJ"/>
</dbReference>
<dbReference type="PANTHER" id="PTHR43222">
    <property type="entry name" value="NUDIX HYDROLASE 23"/>
    <property type="match status" value="1"/>
</dbReference>
<dbReference type="PANTHER" id="PTHR43222:SF11">
    <property type="entry name" value="PHOSPHATASE NUDJ"/>
    <property type="match status" value="1"/>
</dbReference>
<dbReference type="Pfam" id="PF00293">
    <property type="entry name" value="NUDIX"/>
    <property type="match status" value="1"/>
</dbReference>
<dbReference type="PRINTS" id="PR00502">
    <property type="entry name" value="NUDIXFAMILY"/>
</dbReference>
<dbReference type="SUPFAM" id="SSF55811">
    <property type="entry name" value="Nudix"/>
    <property type="match status" value="1"/>
</dbReference>
<dbReference type="PROSITE" id="PS51462">
    <property type="entry name" value="NUDIX"/>
    <property type="match status" value="1"/>
</dbReference>
<dbReference type="PROSITE" id="PS00893">
    <property type="entry name" value="NUDIX_BOX"/>
    <property type="match status" value="1"/>
</dbReference>
<reference key="1">
    <citation type="journal article" date="2007" name="J. Bacteriol.">
        <title>The genome sequence of avian pathogenic Escherichia coli strain O1:K1:H7 shares strong similarities with human extraintestinal pathogenic E. coli genomes.</title>
        <authorList>
            <person name="Johnson T.J."/>
            <person name="Kariyawasam S."/>
            <person name="Wannemuehler Y."/>
            <person name="Mangiamele P."/>
            <person name="Johnson S.J."/>
            <person name="Doetkott C."/>
            <person name="Skyberg J.A."/>
            <person name="Lynne A.M."/>
            <person name="Johnson J.R."/>
            <person name="Nolan L.K."/>
        </authorList>
    </citation>
    <scope>NUCLEOTIDE SEQUENCE [LARGE SCALE GENOMIC DNA]</scope>
</reference>
<keyword id="KW-0002">3D-structure</keyword>
<keyword id="KW-0378">Hydrolase</keyword>
<keyword id="KW-0460">Magnesium</keyword>
<keyword id="KW-1185">Reference proteome</keyword>
<feature type="chain" id="PRO_0000342642" description="Phosphatase NudJ">
    <location>
        <begin position="1"/>
        <end position="153"/>
    </location>
</feature>
<feature type="domain" description="Nudix hydrolase" evidence="2">
    <location>
        <begin position="3"/>
        <end position="131"/>
    </location>
</feature>
<feature type="short sequence motif" description="Nudix box">
    <location>
        <begin position="36"/>
        <end position="57"/>
    </location>
</feature>
<feature type="strand" evidence="4">
    <location>
        <begin position="5"/>
        <end position="14"/>
    </location>
</feature>
<feature type="strand" evidence="4">
    <location>
        <begin position="17"/>
        <end position="25"/>
    </location>
</feature>
<feature type="strand" evidence="4">
    <location>
        <begin position="28"/>
        <end position="32"/>
    </location>
</feature>
<feature type="strand" evidence="4">
    <location>
        <begin position="34"/>
        <end position="37"/>
    </location>
</feature>
<feature type="helix" evidence="4">
    <location>
        <begin position="44"/>
        <end position="56"/>
    </location>
</feature>
<feature type="strand" evidence="4">
    <location>
        <begin position="64"/>
        <end position="71"/>
    </location>
</feature>
<feature type="strand" evidence="4">
    <location>
        <begin position="79"/>
        <end position="87"/>
    </location>
</feature>
<feature type="strand" evidence="4">
    <location>
        <begin position="103"/>
        <end position="107"/>
    </location>
</feature>
<feature type="helix" evidence="4">
    <location>
        <begin position="109"/>
        <end position="113"/>
    </location>
</feature>
<feature type="strand" evidence="4">
    <location>
        <begin position="118"/>
        <end position="120"/>
    </location>
</feature>
<feature type="helix" evidence="4">
    <location>
        <begin position="122"/>
        <end position="131"/>
    </location>
</feature>
<feature type="helix" evidence="4">
    <location>
        <begin position="138"/>
        <end position="141"/>
    </location>
</feature>
<feature type="strand" evidence="4">
    <location>
        <begin position="143"/>
        <end position="145"/>
    </location>
</feature>
<protein>
    <recommendedName>
        <fullName>Phosphatase NudJ</fullName>
        <ecNumber>3.6.1.-</ecNumber>
    </recommendedName>
</protein>
<comment type="cofactor">
    <cofactor evidence="1">
        <name>Mg(2+)</name>
        <dbReference type="ChEBI" id="CHEBI:18420"/>
    </cofactor>
</comment>
<comment type="subunit">
    <text evidence="1">Monomer.</text>
</comment>
<comment type="similarity">
    <text evidence="3">Belongs to the Nudix hydrolase family. NudJ subfamily.</text>
</comment>
<accession>A1AA28</accession>
<name>NUDJ_ECOK1</name>
<sequence>MFKPHVTVACVVHAEGKFLVVEETINGKALWNQPAGHLEADETLVEAAARELWEETGISAQPQHFIRMHQWIAPDKTPFLRFLFAIELEQICPTQPHDSDIDCCRWVSAEEILQASNLRSPLVAESIRCYQSGQRYPLEMIGDFNWPFTKGVI</sequence>
<evidence type="ECO:0000250" key="1"/>
<evidence type="ECO:0000255" key="2">
    <source>
        <dbReference type="PROSITE-ProRule" id="PRU00794"/>
    </source>
</evidence>
<evidence type="ECO:0000305" key="3"/>
<evidence type="ECO:0007829" key="4">
    <source>
        <dbReference type="PDB" id="3SHD"/>
    </source>
</evidence>
<organism>
    <name type="scientific">Escherichia coli O1:K1 / APEC</name>
    <dbReference type="NCBI Taxonomy" id="405955"/>
    <lineage>
        <taxon>Bacteria</taxon>
        <taxon>Pseudomonadati</taxon>
        <taxon>Pseudomonadota</taxon>
        <taxon>Gammaproteobacteria</taxon>
        <taxon>Enterobacterales</taxon>
        <taxon>Enterobacteriaceae</taxon>
        <taxon>Escherichia</taxon>
    </lineage>
</organism>